<accession>A0Q452</accession>
<organism>
    <name type="scientific">Francisella tularensis subsp. novicida (strain U112)</name>
    <dbReference type="NCBI Taxonomy" id="401614"/>
    <lineage>
        <taxon>Bacteria</taxon>
        <taxon>Pseudomonadati</taxon>
        <taxon>Pseudomonadota</taxon>
        <taxon>Gammaproteobacteria</taxon>
        <taxon>Thiotrichales</taxon>
        <taxon>Francisellaceae</taxon>
        <taxon>Francisella</taxon>
    </lineage>
</organism>
<evidence type="ECO:0000255" key="1">
    <source>
        <dbReference type="HAMAP-Rule" id="MF_00500"/>
    </source>
</evidence>
<evidence type="ECO:0000305" key="2"/>
<protein>
    <recommendedName>
        <fullName evidence="1">Small ribosomal subunit protein bS20</fullName>
    </recommendedName>
    <alternativeName>
        <fullName evidence="2">30S ribosomal protein S20</fullName>
    </alternativeName>
</protein>
<proteinExistence type="inferred from homology"/>
<name>RS20_FRATN</name>
<keyword id="KW-0687">Ribonucleoprotein</keyword>
<keyword id="KW-0689">Ribosomal protein</keyword>
<keyword id="KW-0694">RNA-binding</keyword>
<keyword id="KW-0699">rRNA-binding</keyword>
<sequence length="90" mass="10117">MANSKQAKKRIIQAERNRQHNVARRSMMRTFLKKTAYAIEKGDVEAAKENFAKVVPILDKYASKGLIHKNKAARHKSRLSAKIKALATAA</sequence>
<dbReference type="EMBL" id="CP000439">
    <property type="protein sequence ID" value="ABK89017.1"/>
    <property type="molecule type" value="Genomic_DNA"/>
</dbReference>
<dbReference type="RefSeq" id="WP_003017608.1">
    <property type="nucleotide sequence ID" value="NZ_CP009633.1"/>
</dbReference>
<dbReference type="SMR" id="A0Q452"/>
<dbReference type="GeneID" id="75264396"/>
<dbReference type="KEGG" id="ftn:FTN_0106"/>
<dbReference type="KEGG" id="ftx:AW25_94"/>
<dbReference type="BioCyc" id="FTUL401614:G1G75-110-MONOMER"/>
<dbReference type="Proteomes" id="UP000000762">
    <property type="component" value="Chromosome"/>
</dbReference>
<dbReference type="GO" id="GO:0005829">
    <property type="term" value="C:cytosol"/>
    <property type="evidence" value="ECO:0007669"/>
    <property type="project" value="TreeGrafter"/>
</dbReference>
<dbReference type="GO" id="GO:0015935">
    <property type="term" value="C:small ribosomal subunit"/>
    <property type="evidence" value="ECO:0007669"/>
    <property type="project" value="TreeGrafter"/>
</dbReference>
<dbReference type="GO" id="GO:0070181">
    <property type="term" value="F:small ribosomal subunit rRNA binding"/>
    <property type="evidence" value="ECO:0007669"/>
    <property type="project" value="TreeGrafter"/>
</dbReference>
<dbReference type="GO" id="GO:0003735">
    <property type="term" value="F:structural constituent of ribosome"/>
    <property type="evidence" value="ECO:0007669"/>
    <property type="project" value="InterPro"/>
</dbReference>
<dbReference type="GO" id="GO:0006412">
    <property type="term" value="P:translation"/>
    <property type="evidence" value="ECO:0007669"/>
    <property type="project" value="UniProtKB-UniRule"/>
</dbReference>
<dbReference type="FunFam" id="1.20.58.110:FF:000001">
    <property type="entry name" value="30S ribosomal protein S20"/>
    <property type="match status" value="1"/>
</dbReference>
<dbReference type="Gene3D" id="1.20.58.110">
    <property type="entry name" value="Ribosomal protein S20"/>
    <property type="match status" value="1"/>
</dbReference>
<dbReference type="HAMAP" id="MF_00500">
    <property type="entry name" value="Ribosomal_bS20"/>
    <property type="match status" value="1"/>
</dbReference>
<dbReference type="InterPro" id="IPR002583">
    <property type="entry name" value="Ribosomal_bS20"/>
</dbReference>
<dbReference type="InterPro" id="IPR036510">
    <property type="entry name" value="Ribosomal_bS20_sf"/>
</dbReference>
<dbReference type="NCBIfam" id="TIGR00029">
    <property type="entry name" value="S20"/>
    <property type="match status" value="1"/>
</dbReference>
<dbReference type="PANTHER" id="PTHR33398">
    <property type="entry name" value="30S RIBOSOMAL PROTEIN S20"/>
    <property type="match status" value="1"/>
</dbReference>
<dbReference type="PANTHER" id="PTHR33398:SF1">
    <property type="entry name" value="SMALL RIBOSOMAL SUBUNIT PROTEIN BS20C"/>
    <property type="match status" value="1"/>
</dbReference>
<dbReference type="Pfam" id="PF01649">
    <property type="entry name" value="Ribosomal_S20p"/>
    <property type="match status" value="1"/>
</dbReference>
<dbReference type="SUPFAM" id="SSF46992">
    <property type="entry name" value="Ribosomal protein S20"/>
    <property type="match status" value="1"/>
</dbReference>
<gene>
    <name evidence="1" type="primary">rpsT</name>
    <name type="ordered locus">FTN_0106</name>
</gene>
<comment type="function">
    <text evidence="1">Binds directly to 16S ribosomal RNA.</text>
</comment>
<comment type="similarity">
    <text evidence="1">Belongs to the bacterial ribosomal protein bS20 family.</text>
</comment>
<reference key="1">
    <citation type="journal article" date="2007" name="Genome Biol.">
        <title>Comparison of Francisella tularensis genomes reveals evolutionary events associated with the emergence of human pathogenic strains.</title>
        <authorList>
            <person name="Rohmer L."/>
            <person name="Fong C."/>
            <person name="Abmayr S."/>
            <person name="Wasnick M."/>
            <person name="Larson Freeman T.J."/>
            <person name="Radey M."/>
            <person name="Guina T."/>
            <person name="Svensson K."/>
            <person name="Hayden H.S."/>
            <person name="Jacobs M."/>
            <person name="Gallagher L.A."/>
            <person name="Manoil C."/>
            <person name="Ernst R.K."/>
            <person name="Drees B."/>
            <person name="Buckley D."/>
            <person name="Haugen E."/>
            <person name="Bovee D."/>
            <person name="Zhou Y."/>
            <person name="Chang J."/>
            <person name="Levy R."/>
            <person name="Lim R."/>
            <person name="Gillett W."/>
            <person name="Guenthener D."/>
            <person name="Kang A."/>
            <person name="Shaffer S.A."/>
            <person name="Taylor G."/>
            <person name="Chen J."/>
            <person name="Gallis B."/>
            <person name="D'Argenio D.A."/>
            <person name="Forsman M."/>
            <person name="Olson M.V."/>
            <person name="Goodlett D.R."/>
            <person name="Kaul R."/>
            <person name="Miller S.I."/>
            <person name="Brittnacher M.J."/>
        </authorList>
    </citation>
    <scope>NUCLEOTIDE SEQUENCE [LARGE SCALE GENOMIC DNA]</scope>
    <source>
        <strain>U112</strain>
    </source>
</reference>
<feature type="chain" id="PRO_1000014583" description="Small ribosomal subunit protein bS20">
    <location>
        <begin position="1"/>
        <end position="90"/>
    </location>
</feature>